<name>FLUC_SALG2</name>
<reference key="1">
    <citation type="journal article" date="2008" name="Genome Res.">
        <title>Comparative genome analysis of Salmonella enteritidis PT4 and Salmonella gallinarum 287/91 provides insights into evolutionary and host adaptation pathways.</title>
        <authorList>
            <person name="Thomson N.R."/>
            <person name="Clayton D.J."/>
            <person name="Windhorst D."/>
            <person name="Vernikos G."/>
            <person name="Davidson S."/>
            <person name="Churcher C."/>
            <person name="Quail M.A."/>
            <person name="Stevens M."/>
            <person name="Jones M.A."/>
            <person name="Watson M."/>
            <person name="Barron A."/>
            <person name="Layton A."/>
            <person name="Pickard D."/>
            <person name="Kingsley R.A."/>
            <person name="Bignell A."/>
            <person name="Clark L."/>
            <person name="Harris B."/>
            <person name="Ormond D."/>
            <person name="Abdellah Z."/>
            <person name="Brooks K."/>
            <person name="Cherevach I."/>
            <person name="Chillingworth T."/>
            <person name="Woodward J."/>
            <person name="Norberczak H."/>
            <person name="Lord A."/>
            <person name="Arrowsmith C."/>
            <person name="Jagels K."/>
            <person name="Moule S."/>
            <person name="Mungall K."/>
            <person name="Saunders M."/>
            <person name="Whitehead S."/>
            <person name="Chabalgoity J.A."/>
            <person name="Maskell D."/>
            <person name="Humphreys T."/>
            <person name="Roberts M."/>
            <person name="Barrow P.A."/>
            <person name="Dougan G."/>
            <person name="Parkhill J."/>
        </authorList>
    </citation>
    <scope>NUCLEOTIDE SEQUENCE [LARGE SCALE GENOMIC DNA]</scope>
    <source>
        <strain>287/91 / NCTC 13346</strain>
    </source>
</reference>
<feature type="chain" id="PRO_1000125153" description="Fluoride-specific ion channel FluC">
    <location>
        <begin position="1"/>
        <end position="127"/>
    </location>
</feature>
<feature type="transmembrane region" description="Helical" evidence="1">
    <location>
        <begin position="4"/>
        <end position="24"/>
    </location>
</feature>
<feature type="transmembrane region" description="Helical" evidence="1">
    <location>
        <begin position="35"/>
        <end position="55"/>
    </location>
</feature>
<feature type="transmembrane region" description="Helical" evidence="1">
    <location>
        <begin position="71"/>
        <end position="91"/>
    </location>
</feature>
<feature type="transmembrane region" description="Helical" evidence="1">
    <location>
        <begin position="103"/>
        <end position="123"/>
    </location>
</feature>
<feature type="binding site" evidence="1">
    <location>
        <position position="75"/>
    </location>
    <ligand>
        <name>Na(+)</name>
        <dbReference type="ChEBI" id="CHEBI:29101"/>
        <note>structural</note>
    </ligand>
</feature>
<feature type="binding site" evidence="1">
    <location>
        <position position="78"/>
    </location>
    <ligand>
        <name>Na(+)</name>
        <dbReference type="ChEBI" id="CHEBI:29101"/>
        <note>structural</note>
    </ligand>
</feature>
<dbReference type="EMBL" id="AM933173">
    <property type="protein sequence ID" value="CAR36530.1"/>
    <property type="molecule type" value="Genomic_DNA"/>
</dbReference>
<dbReference type="RefSeq" id="WP_000939753.1">
    <property type="nucleotide sequence ID" value="NC_011274.1"/>
</dbReference>
<dbReference type="SMR" id="B5R7X8"/>
<dbReference type="KEGG" id="seg:SG0634"/>
<dbReference type="HOGENOM" id="CLU_114342_3_3_6"/>
<dbReference type="Proteomes" id="UP000008321">
    <property type="component" value="Chromosome"/>
</dbReference>
<dbReference type="GO" id="GO:0005886">
    <property type="term" value="C:plasma membrane"/>
    <property type="evidence" value="ECO:0007669"/>
    <property type="project" value="UniProtKB-SubCell"/>
</dbReference>
<dbReference type="GO" id="GO:0062054">
    <property type="term" value="F:fluoride channel activity"/>
    <property type="evidence" value="ECO:0007669"/>
    <property type="project" value="UniProtKB-UniRule"/>
</dbReference>
<dbReference type="GO" id="GO:0046872">
    <property type="term" value="F:metal ion binding"/>
    <property type="evidence" value="ECO:0007669"/>
    <property type="project" value="UniProtKB-KW"/>
</dbReference>
<dbReference type="GO" id="GO:0140114">
    <property type="term" value="P:cellular detoxification of fluoride"/>
    <property type="evidence" value="ECO:0007669"/>
    <property type="project" value="UniProtKB-UniRule"/>
</dbReference>
<dbReference type="HAMAP" id="MF_00454">
    <property type="entry name" value="FluC"/>
    <property type="match status" value="1"/>
</dbReference>
<dbReference type="InterPro" id="IPR003691">
    <property type="entry name" value="FluC"/>
</dbReference>
<dbReference type="NCBIfam" id="TIGR00494">
    <property type="entry name" value="crcB"/>
    <property type="match status" value="1"/>
</dbReference>
<dbReference type="NCBIfam" id="NF010792">
    <property type="entry name" value="PRK14196.1"/>
    <property type="match status" value="1"/>
</dbReference>
<dbReference type="PANTHER" id="PTHR28259">
    <property type="entry name" value="FLUORIDE EXPORT PROTEIN 1-RELATED"/>
    <property type="match status" value="1"/>
</dbReference>
<dbReference type="PANTHER" id="PTHR28259:SF1">
    <property type="entry name" value="FLUORIDE EXPORT PROTEIN 1-RELATED"/>
    <property type="match status" value="1"/>
</dbReference>
<dbReference type="Pfam" id="PF02537">
    <property type="entry name" value="CRCB"/>
    <property type="match status" value="1"/>
</dbReference>
<proteinExistence type="inferred from homology"/>
<organism>
    <name type="scientific">Salmonella gallinarum (strain 287/91 / NCTC 13346)</name>
    <dbReference type="NCBI Taxonomy" id="550538"/>
    <lineage>
        <taxon>Bacteria</taxon>
        <taxon>Pseudomonadati</taxon>
        <taxon>Pseudomonadota</taxon>
        <taxon>Gammaproteobacteria</taxon>
        <taxon>Enterobacterales</taxon>
        <taxon>Enterobacteriaceae</taxon>
        <taxon>Salmonella</taxon>
    </lineage>
</organism>
<gene>
    <name evidence="1" type="primary">fluC</name>
    <name evidence="1" type="synonym">crcB</name>
    <name type="ordered locus">SG0634</name>
</gene>
<accession>B5R7X8</accession>
<keyword id="KW-0997">Cell inner membrane</keyword>
<keyword id="KW-1003">Cell membrane</keyword>
<keyword id="KW-0407">Ion channel</keyword>
<keyword id="KW-0406">Ion transport</keyword>
<keyword id="KW-0472">Membrane</keyword>
<keyword id="KW-0479">Metal-binding</keyword>
<keyword id="KW-0915">Sodium</keyword>
<keyword id="KW-0812">Transmembrane</keyword>
<keyword id="KW-1133">Transmembrane helix</keyword>
<keyword id="KW-0813">Transport</keyword>
<sequence length="127" mass="13849">MLQLLLAVFIGGGTGSVARWMLSMRFNPLHQAIPIGTLTANLLGAFIIGMGFAWFNRMTHIDPMWKVLITTGFCGGLTTFSTFSAEVVFLLQEGRFGWALLNVLINLLGSFAMTALAFWLFSAAAAR</sequence>
<comment type="function">
    <text evidence="1">Fluoride-specific ion channel. Important for reducing fluoride concentration in the cell, thus reducing its toxicity.</text>
</comment>
<comment type="catalytic activity">
    <reaction evidence="1">
        <text>fluoride(in) = fluoride(out)</text>
        <dbReference type="Rhea" id="RHEA:76159"/>
        <dbReference type="ChEBI" id="CHEBI:17051"/>
    </reaction>
    <physiologicalReaction direction="left-to-right" evidence="1">
        <dbReference type="Rhea" id="RHEA:76160"/>
    </physiologicalReaction>
</comment>
<comment type="activity regulation">
    <text evidence="1">Na(+) is not transported, but it plays an essential structural role and its presence is essential for fluoride channel function.</text>
</comment>
<comment type="subcellular location">
    <subcellularLocation>
        <location evidence="1">Cell inner membrane</location>
        <topology evidence="1">Multi-pass membrane protein</topology>
    </subcellularLocation>
</comment>
<comment type="similarity">
    <text evidence="1">Belongs to the fluoride channel Fluc/FEX (TC 1.A.43) family.</text>
</comment>
<protein>
    <recommendedName>
        <fullName evidence="1">Fluoride-specific ion channel FluC</fullName>
    </recommendedName>
</protein>
<evidence type="ECO:0000255" key="1">
    <source>
        <dbReference type="HAMAP-Rule" id="MF_00454"/>
    </source>
</evidence>